<evidence type="ECO:0000250" key="1"/>
<evidence type="ECO:0000250" key="2">
    <source>
        <dbReference type="UniProtKB" id="P60568"/>
    </source>
</evidence>
<evidence type="ECO:0000305" key="3"/>
<comment type="function">
    <text evidence="2">Cytokine produced by activated CD4-positive helper T-cells and to a lesser extend activated CD8-positive T-cells and natural killer (NK) cells that plays pivotal roles in the immune response and tolerance. Binds to a receptor complex composed of either the high-affinity trimeric IL-2R (IL2RA/CD25, IL2RB/CD122 and IL2RG/CD132) or the low-affinity dimeric IL-2R (IL2RB and IL2RG). Interaction with the receptor leads to oligomerization and conformation changes in the IL-2R subunits resulting in downstream signaling starting with phosphorylation of JAK1 and JAK3. In turn, JAK1 and JAK3 phosphorylate the receptor to form a docking site leading to the phosphorylation of several substrates including STAT5. This process leads to activation of several pathways including STAT, phosphoinositide-3-kinase/PI3K and mitogen-activated protein kinase/MAPK pathways. Functions as a T-cell growth factor and can increase NK-cell cytolytic activity as well. Promotes strong proliferation of activated B-cells and subsequently immunoglobulin production. Plays a pivotal role in regulating the adaptive immune system by controlling the survival and proliferation of regulatory T-cells, which are required for the maintenance of immune tolerance. Moreover, participates in the differentiation and homeostasis of effector T-cell subsets, including Th1, Th2, Th17 as well as memory CD8-positive T-cells.</text>
</comment>
<comment type="subcellular location">
    <subcellularLocation>
        <location>Secreted</location>
    </subcellularLocation>
</comment>
<comment type="similarity">
    <text evidence="3">Belongs to the IL-2 family.</text>
</comment>
<feature type="signal peptide" evidence="1">
    <location>
        <begin position="1"/>
        <end position="20"/>
    </location>
</feature>
<feature type="chain" id="PRO_0000015479" description="Interleukin-2">
    <location>
        <begin position="21"/>
        <end position="154"/>
    </location>
</feature>
<feature type="glycosylation site" description="O-linked (GalNAc...) threonine" evidence="1">
    <location>
        <position position="23"/>
    </location>
</feature>
<feature type="disulfide bond" evidence="1">
    <location>
        <begin position="78"/>
        <end position="126"/>
    </location>
</feature>
<feature type="sequence variant">
    <original>R</original>
    <variation>S</variation>
    <location>
        <position position="25"/>
    </location>
</feature>
<feature type="sequence variant">
    <original>K</original>
    <variation>E</variation>
    <location>
        <position position="74"/>
    </location>
</feature>
<organism>
    <name type="scientific">Cercocebus atys</name>
    <name type="common">Sooty mangabey</name>
    <name type="synonym">Cercocebus torquatus atys</name>
    <dbReference type="NCBI Taxonomy" id="9531"/>
    <lineage>
        <taxon>Eukaryota</taxon>
        <taxon>Metazoa</taxon>
        <taxon>Chordata</taxon>
        <taxon>Craniata</taxon>
        <taxon>Vertebrata</taxon>
        <taxon>Euteleostomi</taxon>
        <taxon>Mammalia</taxon>
        <taxon>Eutheria</taxon>
        <taxon>Euarchontoglires</taxon>
        <taxon>Primates</taxon>
        <taxon>Haplorrhini</taxon>
        <taxon>Catarrhini</taxon>
        <taxon>Cercopithecidae</taxon>
        <taxon>Cercopithecinae</taxon>
        <taxon>Cercocebus</taxon>
    </lineage>
</organism>
<name>IL2_CERAT</name>
<reference key="1">
    <citation type="journal article" date="1995" name="J. Immunol.">
        <title>Comparative sequence analysis of cytokine genes from human and nonhuman primates.</title>
        <authorList>
            <person name="Villinger F.J."/>
            <person name="Brar S.S."/>
            <person name="Mayne A.E."/>
            <person name="Chikkala N."/>
            <person name="Ansari A.A."/>
        </authorList>
    </citation>
    <scope>NUCLEOTIDE SEQUENCE [MRNA]</scope>
    <source>
        <tissue>Blood</tissue>
    </source>
</reference>
<sequence>MYRMQLLSCIALSLALVTNSAPTSRSTKKTQLQLEHLLLDLQMILNGINNYKNPKLTRMLTFKFYMPKKATELKHLQCLEEELKPLEEVLNLAQSKNFHLRDTKDLISNINVIVLELKGSETTLMCEYADETATIVEFLNRWITFCQSIISTLT</sequence>
<gene>
    <name type="primary">IL2</name>
</gene>
<dbReference type="EMBL" id="U19846">
    <property type="protein sequence ID" value="AAB60399.1"/>
    <property type="molecule type" value="mRNA"/>
</dbReference>
<dbReference type="SMR" id="P46649"/>
<dbReference type="STRING" id="9531.ENSCATP00000022075"/>
<dbReference type="GlyCosmos" id="P46649">
    <property type="glycosylation" value="1 site, No reported glycans"/>
</dbReference>
<dbReference type="Proteomes" id="UP000233060">
    <property type="component" value="Unassembled WGS sequence"/>
</dbReference>
<dbReference type="GO" id="GO:0005615">
    <property type="term" value="C:extracellular space"/>
    <property type="evidence" value="ECO:0007669"/>
    <property type="project" value="UniProtKB-KW"/>
</dbReference>
<dbReference type="GO" id="GO:0005125">
    <property type="term" value="F:cytokine activity"/>
    <property type="evidence" value="ECO:0007669"/>
    <property type="project" value="UniProtKB-KW"/>
</dbReference>
<dbReference type="GO" id="GO:0008083">
    <property type="term" value="F:growth factor activity"/>
    <property type="evidence" value="ECO:0007669"/>
    <property type="project" value="UniProtKB-KW"/>
</dbReference>
<dbReference type="GO" id="GO:0005134">
    <property type="term" value="F:interleukin-2 receptor binding"/>
    <property type="evidence" value="ECO:0007669"/>
    <property type="project" value="InterPro"/>
</dbReference>
<dbReference type="GO" id="GO:0002250">
    <property type="term" value="P:adaptive immune response"/>
    <property type="evidence" value="ECO:0007669"/>
    <property type="project" value="UniProtKB-KW"/>
</dbReference>
<dbReference type="FunFam" id="1.20.1250.10:FF:000025">
    <property type="entry name" value="Interleukin-2"/>
    <property type="match status" value="1"/>
</dbReference>
<dbReference type="Gene3D" id="1.20.1250.10">
    <property type="match status" value="1"/>
</dbReference>
<dbReference type="InterPro" id="IPR009079">
    <property type="entry name" value="4_helix_cytokine-like_core"/>
</dbReference>
<dbReference type="InterPro" id="IPR000779">
    <property type="entry name" value="IL-2"/>
</dbReference>
<dbReference type="InterPro" id="IPR030477">
    <property type="entry name" value="IL-2_CS"/>
</dbReference>
<dbReference type="PANTHER" id="PTHR48487">
    <property type="entry name" value="INTERLEUKIN-2"/>
    <property type="match status" value="1"/>
</dbReference>
<dbReference type="PANTHER" id="PTHR48487:SF1">
    <property type="entry name" value="INTERLEUKIN-2"/>
    <property type="match status" value="1"/>
</dbReference>
<dbReference type="Pfam" id="PF00715">
    <property type="entry name" value="IL2"/>
    <property type="match status" value="1"/>
</dbReference>
<dbReference type="PRINTS" id="PR00265">
    <property type="entry name" value="INTERLEUKIN2"/>
</dbReference>
<dbReference type="SMART" id="SM00189">
    <property type="entry name" value="IL2"/>
    <property type="match status" value="1"/>
</dbReference>
<dbReference type="SUPFAM" id="SSF47266">
    <property type="entry name" value="4-helical cytokines"/>
    <property type="match status" value="1"/>
</dbReference>
<dbReference type="PROSITE" id="PS00424">
    <property type="entry name" value="INTERLEUKIN_2"/>
    <property type="match status" value="1"/>
</dbReference>
<protein>
    <recommendedName>
        <fullName>Interleukin-2</fullName>
        <shortName>IL-2</shortName>
    </recommendedName>
    <alternativeName>
        <fullName>T-cell growth factor</fullName>
        <shortName>TCGF</shortName>
    </alternativeName>
</protein>
<keyword id="KW-1064">Adaptive immunity</keyword>
<keyword id="KW-0202">Cytokine</keyword>
<keyword id="KW-1015">Disulfide bond</keyword>
<keyword id="KW-0325">Glycoprotein</keyword>
<keyword id="KW-0339">Growth factor</keyword>
<keyword id="KW-0391">Immunity</keyword>
<keyword id="KW-1185">Reference proteome</keyword>
<keyword id="KW-0964">Secreted</keyword>
<keyword id="KW-0732">Signal</keyword>
<proteinExistence type="evidence at transcript level"/>
<accession>P46649</accession>